<organism>
    <name type="scientific">Lonomia obliqua</name>
    <name type="common">Moth</name>
    <dbReference type="NCBI Taxonomy" id="304329"/>
    <lineage>
        <taxon>Eukaryota</taxon>
        <taxon>Metazoa</taxon>
        <taxon>Ecdysozoa</taxon>
        <taxon>Arthropoda</taxon>
        <taxon>Hexapoda</taxon>
        <taxon>Insecta</taxon>
        <taxon>Pterygota</taxon>
        <taxon>Neoptera</taxon>
        <taxon>Endopterygota</taxon>
        <taxon>Lepidoptera</taxon>
        <taxon>Glossata</taxon>
        <taxon>Ditrysia</taxon>
        <taxon>Bombycoidea</taxon>
        <taxon>Saturniidae</taxon>
        <taxon>Hemileucinae</taxon>
        <taxon>Lonomia</taxon>
    </lineage>
</organism>
<evidence type="ECO:0000305" key="1"/>
<dbReference type="EMBL" id="AY829773">
    <property type="protein sequence ID" value="AAV91387.1"/>
    <property type="molecule type" value="mRNA"/>
</dbReference>
<dbReference type="SMR" id="Q5MGL3"/>
<dbReference type="GO" id="GO:0022625">
    <property type="term" value="C:cytosolic large ribosomal subunit"/>
    <property type="evidence" value="ECO:0007669"/>
    <property type="project" value="TreeGrafter"/>
</dbReference>
<dbReference type="GO" id="GO:0003735">
    <property type="term" value="F:structural constituent of ribosome"/>
    <property type="evidence" value="ECO:0007669"/>
    <property type="project" value="InterPro"/>
</dbReference>
<dbReference type="GO" id="GO:0022618">
    <property type="term" value="P:protein-RNA complex assembly"/>
    <property type="evidence" value="ECO:0007669"/>
    <property type="project" value="TreeGrafter"/>
</dbReference>
<dbReference type="GO" id="GO:0006412">
    <property type="term" value="P:translation"/>
    <property type="evidence" value="ECO:0007669"/>
    <property type="project" value="InterPro"/>
</dbReference>
<dbReference type="FunFam" id="3.30.720.90:FF:000001">
    <property type="entry name" value="60S ribosomal protein L38"/>
    <property type="match status" value="1"/>
</dbReference>
<dbReference type="Gene3D" id="3.30.720.90">
    <property type="match status" value="1"/>
</dbReference>
<dbReference type="InterPro" id="IPR002675">
    <property type="entry name" value="Ribosomal_eL38"/>
</dbReference>
<dbReference type="InterPro" id="IPR038464">
    <property type="entry name" value="Ribosomal_eL38_sf"/>
</dbReference>
<dbReference type="PANTHER" id="PTHR10965">
    <property type="entry name" value="60S RIBOSOMAL PROTEIN L38"/>
    <property type="match status" value="1"/>
</dbReference>
<dbReference type="PANTHER" id="PTHR10965:SF0">
    <property type="entry name" value="LARGE RIBOSOMAL SUBUNIT PROTEIN EL38"/>
    <property type="match status" value="1"/>
</dbReference>
<dbReference type="Pfam" id="PF01781">
    <property type="entry name" value="Ribosomal_L38e"/>
    <property type="match status" value="1"/>
</dbReference>
<accession>Q5MGL3</accession>
<keyword id="KW-0687">Ribonucleoprotein</keyword>
<keyword id="KW-0689">Ribosomal protein</keyword>
<reference key="1">
    <citation type="journal article" date="2005" name="Gene">
        <title>A catalog for the transcripts from the venomous structures of the caterpillar Lonomia obliqua: identification of the proteins potentially involved in the coagulation disorder and hemorrhagic syndrome.</title>
        <authorList>
            <person name="Veiga A.B.G."/>
            <person name="Ribeiro J.M.C."/>
            <person name="Guimaraes J.A."/>
            <person name="Francischetti I.M.B."/>
        </authorList>
    </citation>
    <scope>NUCLEOTIDE SEQUENCE [LARGE SCALE MRNA]</scope>
    <source>
        <tissue>Tegument</tissue>
    </source>
</reference>
<comment type="similarity">
    <text evidence="1">Belongs to the eukaryotic ribosomal protein eL38 family.</text>
</comment>
<feature type="chain" id="PRO_0000319561" description="Large ribosomal subunit protein eL38">
    <location>
        <begin position="1"/>
        <end position="70"/>
    </location>
</feature>
<proteinExistence type="inferred from homology"/>
<name>RL38_LONON</name>
<protein>
    <recommendedName>
        <fullName evidence="1">Large ribosomal subunit protein eL38</fullName>
    </recommendedName>
    <alternativeName>
        <fullName>60S ribosomal protein L38</fullName>
    </alternativeName>
</protein>
<sequence length="70" mass="8242">MPREIKDIKDFLLKARRKDAKSVEIKKNPENVKFKVRCSRFLYTLVITDKEKAEKLKQSLPPGLQVKEVK</sequence>
<gene>
    <name type="primary">RpL38</name>
</gene>